<feature type="chain" id="PRO_0000292298" description="Pyridoxine/pyridoxamine 5'-phosphate oxidase">
    <location>
        <begin position="1"/>
        <end position="206"/>
    </location>
</feature>
<feature type="binding site" evidence="1">
    <location>
        <begin position="49"/>
        <end position="54"/>
    </location>
    <ligand>
        <name>FMN</name>
        <dbReference type="ChEBI" id="CHEBI:58210"/>
    </ligand>
</feature>
<feature type="binding site" evidence="1">
    <location>
        <position position="54"/>
    </location>
    <ligand>
        <name>substrate</name>
    </ligand>
</feature>
<feature type="binding site" evidence="1">
    <location>
        <begin position="69"/>
        <end position="70"/>
    </location>
    <ligand>
        <name>FMN</name>
        <dbReference type="ChEBI" id="CHEBI:58210"/>
    </ligand>
</feature>
<feature type="binding site" evidence="1">
    <location>
        <position position="76"/>
    </location>
    <ligand>
        <name>FMN</name>
        <dbReference type="ChEBI" id="CHEBI:58210"/>
    </ligand>
</feature>
<feature type="binding site" evidence="1">
    <location>
        <position position="98"/>
    </location>
    <ligand>
        <name>FMN</name>
        <dbReference type="ChEBI" id="CHEBI:58210"/>
    </ligand>
</feature>
<feature type="binding site" evidence="1">
    <location>
        <position position="116"/>
    </location>
    <ligand>
        <name>substrate</name>
    </ligand>
</feature>
<feature type="binding site" evidence="1">
    <location>
        <position position="120"/>
    </location>
    <ligand>
        <name>substrate</name>
    </ligand>
</feature>
<feature type="binding site" evidence="1">
    <location>
        <position position="124"/>
    </location>
    <ligand>
        <name>substrate</name>
    </ligand>
</feature>
<feature type="binding site" evidence="1">
    <location>
        <begin position="133"/>
        <end position="134"/>
    </location>
    <ligand>
        <name>FMN</name>
        <dbReference type="ChEBI" id="CHEBI:58210"/>
    </ligand>
</feature>
<feature type="binding site" evidence="1">
    <location>
        <position position="177"/>
    </location>
    <ligand>
        <name>FMN</name>
        <dbReference type="ChEBI" id="CHEBI:58210"/>
    </ligand>
</feature>
<feature type="binding site" evidence="1">
    <location>
        <begin position="183"/>
        <end position="185"/>
    </location>
    <ligand>
        <name>substrate</name>
    </ligand>
</feature>
<feature type="binding site" evidence="1">
    <location>
        <position position="187"/>
    </location>
    <ligand>
        <name>FMN</name>
        <dbReference type="ChEBI" id="CHEBI:58210"/>
    </ligand>
</feature>
<evidence type="ECO:0000255" key="1">
    <source>
        <dbReference type="HAMAP-Rule" id="MF_01629"/>
    </source>
</evidence>
<reference key="1">
    <citation type="submission" date="2006-02" db="EMBL/GenBank/DDBJ databases">
        <title>Complete sequence of chromosome of Jannaschia sp. CCS1.</title>
        <authorList>
            <consortium name="US DOE Joint Genome Institute"/>
            <person name="Copeland A."/>
            <person name="Lucas S."/>
            <person name="Lapidus A."/>
            <person name="Barry K."/>
            <person name="Detter J.C."/>
            <person name="Glavina del Rio T."/>
            <person name="Hammon N."/>
            <person name="Israni S."/>
            <person name="Pitluck S."/>
            <person name="Brettin T."/>
            <person name="Bruce D."/>
            <person name="Han C."/>
            <person name="Tapia R."/>
            <person name="Gilna P."/>
            <person name="Chertkov O."/>
            <person name="Saunders E."/>
            <person name="Schmutz J."/>
            <person name="Larimer F."/>
            <person name="Land M."/>
            <person name="Kyrpides N."/>
            <person name="Lykidis A."/>
            <person name="Moran M.A."/>
            <person name="Belas R."/>
            <person name="Ye W."/>
            <person name="Buchan A."/>
            <person name="Gonzalez J.M."/>
            <person name="Schell M.A."/>
            <person name="Richardson P."/>
        </authorList>
    </citation>
    <scope>NUCLEOTIDE SEQUENCE [LARGE SCALE GENOMIC DNA]</scope>
    <source>
        <strain>CCS1</strain>
    </source>
</reference>
<organism>
    <name type="scientific">Jannaschia sp. (strain CCS1)</name>
    <dbReference type="NCBI Taxonomy" id="290400"/>
    <lineage>
        <taxon>Bacteria</taxon>
        <taxon>Pseudomonadati</taxon>
        <taxon>Pseudomonadota</taxon>
        <taxon>Alphaproteobacteria</taxon>
        <taxon>Rhodobacterales</taxon>
        <taxon>Roseobacteraceae</taxon>
        <taxon>Jannaschia</taxon>
    </lineage>
</organism>
<comment type="function">
    <text evidence="1">Catalyzes the oxidation of either pyridoxine 5'-phosphate (PNP) or pyridoxamine 5'-phosphate (PMP) into pyridoxal 5'-phosphate (PLP).</text>
</comment>
<comment type="catalytic activity">
    <reaction evidence="1">
        <text>pyridoxamine 5'-phosphate + O2 + H2O = pyridoxal 5'-phosphate + H2O2 + NH4(+)</text>
        <dbReference type="Rhea" id="RHEA:15817"/>
        <dbReference type="ChEBI" id="CHEBI:15377"/>
        <dbReference type="ChEBI" id="CHEBI:15379"/>
        <dbReference type="ChEBI" id="CHEBI:16240"/>
        <dbReference type="ChEBI" id="CHEBI:28938"/>
        <dbReference type="ChEBI" id="CHEBI:58451"/>
        <dbReference type="ChEBI" id="CHEBI:597326"/>
        <dbReference type="EC" id="1.4.3.5"/>
    </reaction>
</comment>
<comment type="catalytic activity">
    <reaction evidence="1">
        <text>pyridoxine 5'-phosphate + O2 = pyridoxal 5'-phosphate + H2O2</text>
        <dbReference type="Rhea" id="RHEA:15149"/>
        <dbReference type="ChEBI" id="CHEBI:15379"/>
        <dbReference type="ChEBI" id="CHEBI:16240"/>
        <dbReference type="ChEBI" id="CHEBI:58589"/>
        <dbReference type="ChEBI" id="CHEBI:597326"/>
        <dbReference type="EC" id="1.4.3.5"/>
    </reaction>
</comment>
<comment type="cofactor">
    <cofactor evidence="1">
        <name>FMN</name>
        <dbReference type="ChEBI" id="CHEBI:58210"/>
    </cofactor>
    <text evidence="1">Binds 1 FMN per subunit.</text>
</comment>
<comment type="pathway">
    <text evidence="1">Cofactor metabolism; pyridoxal 5'-phosphate salvage; pyridoxal 5'-phosphate from pyridoxamine 5'-phosphate: step 1/1.</text>
</comment>
<comment type="pathway">
    <text evidence="1">Cofactor metabolism; pyridoxal 5'-phosphate salvage; pyridoxal 5'-phosphate from pyridoxine 5'-phosphate: step 1/1.</text>
</comment>
<comment type="subunit">
    <text evidence="1">Homodimer.</text>
</comment>
<comment type="similarity">
    <text evidence="1">Belongs to the pyridoxamine 5'-phosphate oxidase family.</text>
</comment>
<gene>
    <name evidence="1" type="primary">pdxH</name>
    <name type="ordered locus">Jann_2475</name>
</gene>
<sequence length="206" mass="22671">MSERSGIFAGDDPFVLARAWLAEAEASEPNDPNAIALSTVDADGLPNARMVLLKEIESHGAGQGGFVFYTNYGSAKGQEIAQAGKAAFVCHWKSLHRQIRVRGLTETEDGPQADAYYASRSLKSRLGAWASDQSKPLSSRGALMADVARVTAEQGTNPKRPPFWGGVRITPLEIEFWADGAFRLHDRFQWRRGSVDDPWEVQRLNP</sequence>
<proteinExistence type="inferred from homology"/>
<dbReference type="EC" id="1.4.3.5" evidence="1"/>
<dbReference type="EMBL" id="CP000264">
    <property type="protein sequence ID" value="ABD55392.1"/>
    <property type="molecule type" value="Genomic_DNA"/>
</dbReference>
<dbReference type="RefSeq" id="WP_011455596.1">
    <property type="nucleotide sequence ID" value="NC_007802.1"/>
</dbReference>
<dbReference type="SMR" id="Q28PH0"/>
<dbReference type="STRING" id="290400.Jann_2475"/>
<dbReference type="KEGG" id="jan:Jann_2475"/>
<dbReference type="eggNOG" id="COG0259">
    <property type="taxonomic scope" value="Bacteria"/>
</dbReference>
<dbReference type="HOGENOM" id="CLU_032263_2_3_5"/>
<dbReference type="OrthoDB" id="9780392at2"/>
<dbReference type="UniPathway" id="UPA01068">
    <property type="reaction ID" value="UER00304"/>
</dbReference>
<dbReference type="UniPathway" id="UPA01068">
    <property type="reaction ID" value="UER00305"/>
</dbReference>
<dbReference type="Proteomes" id="UP000008326">
    <property type="component" value="Chromosome"/>
</dbReference>
<dbReference type="GO" id="GO:0010181">
    <property type="term" value="F:FMN binding"/>
    <property type="evidence" value="ECO:0007669"/>
    <property type="project" value="UniProtKB-UniRule"/>
</dbReference>
<dbReference type="GO" id="GO:0004733">
    <property type="term" value="F:pyridoxamine phosphate oxidase activity"/>
    <property type="evidence" value="ECO:0007669"/>
    <property type="project" value="UniProtKB-UniRule"/>
</dbReference>
<dbReference type="GO" id="GO:0008615">
    <property type="term" value="P:pyridoxine biosynthetic process"/>
    <property type="evidence" value="ECO:0007669"/>
    <property type="project" value="UniProtKB-KW"/>
</dbReference>
<dbReference type="Gene3D" id="2.30.110.10">
    <property type="entry name" value="Electron Transport, Fmn-binding Protein, Chain A"/>
    <property type="match status" value="1"/>
</dbReference>
<dbReference type="HAMAP" id="MF_01629">
    <property type="entry name" value="PdxH"/>
    <property type="match status" value="1"/>
</dbReference>
<dbReference type="InterPro" id="IPR000659">
    <property type="entry name" value="Pyridox_Oxase"/>
</dbReference>
<dbReference type="InterPro" id="IPR019740">
    <property type="entry name" value="Pyridox_Oxase_CS"/>
</dbReference>
<dbReference type="InterPro" id="IPR011576">
    <property type="entry name" value="Pyridox_Oxase_N"/>
</dbReference>
<dbReference type="InterPro" id="IPR019576">
    <property type="entry name" value="Pyridoxamine_oxidase_dimer_C"/>
</dbReference>
<dbReference type="InterPro" id="IPR012349">
    <property type="entry name" value="Split_barrel_FMN-bd"/>
</dbReference>
<dbReference type="NCBIfam" id="TIGR00558">
    <property type="entry name" value="pdxH"/>
    <property type="match status" value="1"/>
</dbReference>
<dbReference type="NCBIfam" id="NF004231">
    <property type="entry name" value="PRK05679.1"/>
    <property type="match status" value="1"/>
</dbReference>
<dbReference type="PANTHER" id="PTHR10851:SF0">
    <property type="entry name" value="PYRIDOXINE-5'-PHOSPHATE OXIDASE"/>
    <property type="match status" value="1"/>
</dbReference>
<dbReference type="PANTHER" id="PTHR10851">
    <property type="entry name" value="PYRIDOXINE-5-PHOSPHATE OXIDASE"/>
    <property type="match status" value="1"/>
</dbReference>
<dbReference type="Pfam" id="PF10590">
    <property type="entry name" value="PNP_phzG_C"/>
    <property type="match status" value="1"/>
</dbReference>
<dbReference type="Pfam" id="PF01243">
    <property type="entry name" value="PNPOx_N"/>
    <property type="match status" value="1"/>
</dbReference>
<dbReference type="PIRSF" id="PIRSF000190">
    <property type="entry name" value="Pyd_amn-ph_oxd"/>
    <property type="match status" value="1"/>
</dbReference>
<dbReference type="SUPFAM" id="SSF50475">
    <property type="entry name" value="FMN-binding split barrel"/>
    <property type="match status" value="1"/>
</dbReference>
<dbReference type="PROSITE" id="PS01064">
    <property type="entry name" value="PYRIDOX_OXIDASE"/>
    <property type="match status" value="1"/>
</dbReference>
<accession>Q28PH0</accession>
<protein>
    <recommendedName>
        <fullName evidence="1">Pyridoxine/pyridoxamine 5'-phosphate oxidase</fullName>
        <ecNumber evidence="1">1.4.3.5</ecNumber>
    </recommendedName>
    <alternativeName>
        <fullName evidence="1">PNP/PMP oxidase</fullName>
        <shortName evidence="1">PNPOx</shortName>
    </alternativeName>
    <alternativeName>
        <fullName evidence="1">Pyridoxal 5'-phosphate synthase</fullName>
    </alternativeName>
</protein>
<keyword id="KW-0285">Flavoprotein</keyword>
<keyword id="KW-0288">FMN</keyword>
<keyword id="KW-0560">Oxidoreductase</keyword>
<keyword id="KW-0664">Pyridoxine biosynthesis</keyword>
<keyword id="KW-1185">Reference proteome</keyword>
<name>PDXH_JANSC</name>